<comment type="pathway">
    <text evidence="5">Glycan metabolism.</text>
</comment>
<comment type="subcellular location">
    <subcellularLocation>
        <location evidence="2">Membrane</location>
        <topology evidence="5">Single-pass type II membrane protein</topology>
    </subcellularLocation>
</comment>
<comment type="similarity">
    <text evidence="5">Belongs to the glycosyltransferase GT106 family.</text>
</comment>
<comment type="sequence caution" evidence="5">
    <conflict type="erroneous gene model prediction">
        <sequence resource="EMBL-CDS" id="AAF18531"/>
    </conflict>
</comment>
<protein>
    <recommendedName>
        <fullName evidence="5">O-fucosyltransferase 7</fullName>
        <shortName evidence="5">O-FucT-7</shortName>
        <ecNumber evidence="5">2.4.1.-</ecNumber>
    </recommendedName>
    <alternativeName>
        <fullName evidence="5">O-fucosyltransferase family protein</fullName>
    </alternativeName>
</protein>
<accession>B7ZWR7</accession>
<accession>Q9SK88</accession>
<keyword id="KW-0119">Carbohydrate metabolism</keyword>
<keyword id="KW-0294">Fucose metabolism</keyword>
<keyword id="KW-0325">Glycoprotein</keyword>
<keyword id="KW-0328">Glycosyltransferase</keyword>
<keyword id="KW-0472">Membrane</keyword>
<keyword id="KW-1185">Reference proteome</keyword>
<keyword id="KW-0735">Signal-anchor</keyword>
<keyword id="KW-0808">Transferase</keyword>
<keyword id="KW-0812">Transmembrane</keyword>
<keyword id="KW-1133">Transmembrane helix</keyword>
<reference key="1">
    <citation type="journal article" date="2000" name="Nature">
        <title>Sequence and analysis of chromosome 1 of the plant Arabidopsis thaliana.</title>
        <authorList>
            <person name="Theologis A."/>
            <person name="Ecker J.R."/>
            <person name="Palm C.J."/>
            <person name="Federspiel N.A."/>
            <person name="Kaul S."/>
            <person name="White O."/>
            <person name="Alonso J."/>
            <person name="Altafi H."/>
            <person name="Araujo R."/>
            <person name="Bowman C.L."/>
            <person name="Brooks S.Y."/>
            <person name="Buehler E."/>
            <person name="Chan A."/>
            <person name="Chao Q."/>
            <person name="Chen H."/>
            <person name="Cheuk R.F."/>
            <person name="Chin C.W."/>
            <person name="Chung M.K."/>
            <person name="Conn L."/>
            <person name="Conway A.B."/>
            <person name="Conway A.R."/>
            <person name="Creasy T.H."/>
            <person name="Dewar K."/>
            <person name="Dunn P."/>
            <person name="Etgu P."/>
            <person name="Feldblyum T.V."/>
            <person name="Feng J.-D."/>
            <person name="Fong B."/>
            <person name="Fujii C.Y."/>
            <person name="Gill J.E."/>
            <person name="Goldsmith A.D."/>
            <person name="Haas B."/>
            <person name="Hansen N.F."/>
            <person name="Hughes B."/>
            <person name="Huizar L."/>
            <person name="Hunter J.L."/>
            <person name="Jenkins J."/>
            <person name="Johnson-Hopson C."/>
            <person name="Khan S."/>
            <person name="Khaykin E."/>
            <person name="Kim C.J."/>
            <person name="Koo H.L."/>
            <person name="Kremenetskaia I."/>
            <person name="Kurtz D.B."/>
            <person name="Kwan A."/>
            <person name="Lam B."/>
            <person name="Langin-Hooper S."/>
            <person name="Lee A."/>
            <person name="Lee J.M."/>
            <person name="Lenz C.A."/>
            <person name="Li J.H."/>
            <person name="Li Y.-P."/>
            <person name="Lin X."/>
            <person name="Liu S.X."/>
            <person name="Liu Z.A."/>
            <person name="Luros J.S."/>
            <person name="Maiti R."/>
            <person name="Marziali A."/>
            <person name="Militscher J."/>
            <person name="Miranda M."/>
            <person name="Nguyen M."/>
            <person name="Nierman W.C."/>
            <person name="Osborne B.I."/>
            <person name="Pai G."/>
            <person name="Peterson J."/>
            <person name="Pham P.K."/>
            <person name="Rizzo M."/>
            <person name="Rooney T."/>
            <person name="Rowley D."/>
            <person name="Sakano H."/>
            <person name="Salzberg S.L."/>
            <person name="Schwartz J.R."/>
            <person name="Shinn P."/>
            <person name="Southwick A.M."/>
            <person name="Sun H."/>
            <person name="Tallon L.J."/>
            <person name="Tambunga G."/>
            <person name="Toriumi M.J."/>
            <person name="Town C.D."/>
            <person name="Utterback T."/>
            <person name="Van Aken S."/>
            <person name="Vaysberg M."/>
            <person name="Vysotskaia V.S."/>
            <person name="Walker M."/>
            <person name="Wu D."/>
            <person name="Yu G."/>
            <person name="Fraser C.M."/>
            <person name="Venter J.C."/>
            <person name="Davis R.W."/>
        </authorList>
    </citation>
    <scope>NUCLEOTIDE SEQUENCE [LARGE SCALE GENOMIC DNA]</scope>
    <source>
        <strain>cv. Columbia</strain>
    </source>
</reference>
<reference key="2">
    <citation type="journal article" date="2017" name="Plant J.">
        <title>Araport11: a complete reannotation of the Arabidopsis thaliana reference genome.</title>
        <authorList>
            <person name="Cheng C.Y."/>
            <person name="Krishnakumar V."/>
            <person name="Chan A.P."/>
            <person name="Thibaud-Nissen F."/>
            <person name="Schobel S."/>
            <person name="Town C.D."/>
        </authorList>
    </citation>
    <scope>GENOME REANNOTATION</scope>
    <source>
        <strain>cv. Columbia</strain>
    </source>
</reference>
<reference key="3">
    <citation type="submission" date="2009-01" db="EMBL/GenBank/DDBJ databases">
        <title>Arabidopsis ORF clones.</title>
        <authorList>
            <person name="de los Reyes C."/>
            <person name="Quan R."/>
            <person name="Chen H."/>
            <person name="Bautista V."/>
            <person name="Kim C.J."/>
            <person name="Ecker J.R."/>
        </authorList>
    </citation>
    <scope>NUCLEOTIDE SEQUENCE [LARGE SCALE MRNA]</scope>
    <source>
        <strain>cv. Columbia</strain>
    </source>
</reference>
<reference key="4">
    <citation type="journal article" date="2012" name="Front. Plant Sci.">
        <title>Plant glycosyltransferases beyond CAZy: a perspective on DUF families.</title>
        <authorList>
            <person name="Hansen S.F."/>
            <person name="Harholt J."/>
            <person name="Oikawa A."/>
            <person name="Scheller H.V."/>
        </authorList>
    </citation>
    <scope>GENE FAMILY</scope>
    <scope>REVIEW</scope>
</reference>
<reference key="5">
    <citation type="journal article" date="2012" name="PLoS ONE">
        <title>The FRIABLE1 gene product affects cell adhesion in Arabidopsis.</title>
        <authorList>
            <person name="Neumetzler L."/>
            <person name="Humphrey T."/>
            <person name="Lumba S."/>
            <person name="Snyder S."/>
            <person name="Yeats T.H."/>
            <person name="Usadel B."/>
            <person name="Vasilevski A."/>
            <person name="Patel J."/>
            <person name="Rose J.K."/>
            <person name="Persson S."/>
            <person name="Bonetta D."/>
        </authorList>
    </citation>
    <scope>GENE FAMILY</scope>
</reference>
<reference key="6">
    <citation type="journal article" date="2012" name="PLoS ONE">
        <title>Identification of putative rhamnogalacturonan-II specific glycosyltransferases in Arabidopsis using a combination of bioinformatics approaches.</title>
        <authorList>
            <person name="Voxeur A."/>
            <person name="Andre A."/>
            <person name="Breton C."/>
            <person name="Lerouge P."/>
        </authorList>
    </citation>
    <scope>GENE FAMILY</scope>
</reference>
<reference key="7">
    <citation type="journal article" date="2013" name="Plant J.">
        <title>Identification of an additional protein involved in mannan biosynthesis.</title>
        <authorList>
            <person name="Wang Y."/>
            <person name="Mortimer J.C."/>
            <person name="Davis J."/>
            <person name="Dupree P."/>
            <person name="Keegstra K."/>
        </authorList>
    </citation>
    <scope>GENE FAMILY</scope>
</reference>
<reference key="8">
    <citation type="journal article" date="2014" name="Plant J.">
        <title>The plant glycosyltransferase clone collection for functional genomics.</title>
        <authorList>
            <person name="Lao J."/>
            <person name="Oikawa A."/>
            <person name="Bromley J.R."/>
            <person name="McInerney P."/>
            <person name="Suttangkakul A."/>
            <person name="Smith-Moritz A.M."/>
            <person name="Plahar H."/>
            <person name="Chiu T.-Y."/>
            <person name="Gonzalez Fernandez-Nino S.M.G."/>
            <person name="Ebert B."/>
            <person name="Yang F."/>
            <person name="Christiansen K.M."/>
            <person name="Hansen S.F."/>
            <person name="Stonebloom S."/>
            <person name="Adams P.D."/>
            <person name="Ronald P.C."/>
            <person name="Hillson N.J."/>
            <person name="Hadi M.Z."/>
            <person name="Vega-Sanchez M.E."/>
            <person name="Loque D."/>
            <person name="Scheller H.V."/>
            <person name="Heazlewood J.L."/>
        </authorList>
    </citation>
    <scope>WEB RESOURCE</scope>
</reference>
<organism>
    <name type="scientific">Arabidopsis thaliana</name>
    <name type="common">Mouse-ear cress</name>
    <dbReference type="NCBI Taxonomy" id="3702"/>
    <lineage>
        <taxon>Eukaryota</taxon>
        <taxon>Viridiplantae</taxon>
        <taxon>Streptophyta</taxon>
        <taxon>Embryophyta</taxon>
        <taxon>Tracheophyta</taxon>
        <taxon>Spermatophyta</taxon>
        <taxon>Magnoliopsida</taxon>
        <taxon>eudicotyledons</taxon>
        <taxon>Gunneridae</taxon>
        <taxon>Pentapetalae</taxon>
        <taxon>rosids</taxon>
        <taxon>malvids</taxon>
        <taxon>Brassicales</taxon>
        <taxon>Brassicaceae</taxon>
        <taxon>Camelineae</taxon>
        <taxon>Arabidopsis</taxon>
    </lineage>
</organism>
<evidence type="ECO:0000250" key="1">
    <source>
        <dbReference type="UniProtKB" id="Q9H488"/>
    </source>
</evidence>
<evidence type="ECO:0000255" key="2"/>
<evidence type="ECO:0000255" key="3">
    <source>
        <dbReference type="PROSITE-ProRule" id="PRU00498"/>
    </source>
</evidence>
<evidence type="ECO:0000256" key="4">
    <source>
        <dbReference type="SAM" id="MobiDB-lite"/>
    </source>
</evidence>
<evidence type="ECO:0000305" key="5"/>
<evidence type="ECO:0000312" key="6">
    <source>
        <dbReference type="Araport" id="AT1G22460"/>
    </source>
</evidence>
<evidence type="ECO:0000312" key="7">
    <source>
        <dbReference type="EMBL" id="AAF18531.1"/>
    </source>
</evidence>
<gene>
    <name evidence="5" type="primary">OFUT7</name>
    <name evidence="6" type="ordered locus">At1g22460</name>
    <name evidence="7" type="ORF">F12K8.19</name>
</gene>
<proteinExistence type="evidence at transcript level"/>
<feature type="chain" id="PRO_0000442070" description="O-fucosyltransferase 7">
    <location>
        <begin position="1"/>
        <end position="565"/>
    </location>
</feature>
<feature type="transmembrane region" description="Helical; Signal-anchor for type II membrane protein" evidence="5">
    <location>
        <begin position="17"/>
        <end position="37"/>
    </location>
</feature>
<feature type="region of interest" description="Disordered" evidence="4">
    <location>
        <begin position="515"/>
        <end position="565"/>
    </location>
</feature>
<feature type="compositionally biased region" description="Basic residues" evidence="4">
    <location>
        <begin position="520"/>
        <end position="530"/>
    </location>
</feature>
<feature type="binding site" evidence="1">
    <location>
        <begin position="327"/>
        <end position="329"/>
    </location>
    <ligand>
        <name>substrate</name>
    </ligand>
</feature>
<feature type="glycosylation site" description="N-linked (GlcNAc...) asparagine" evidence="3">
    <location>
        <position position="62"/>
    </location>
</feature>
<feature type="glycosylation site" description="N-linked (GlcNAc...) asparagine" evidence="3">
    <location>
        <position position="73"/>
    </location>
</feature>
<feature type="glycosylation site" description="N-linked (GlcNAc...) asparagine" evidence="3">
    <location>
        <position position="104"/>
    </location>
</feature>
<feature type="glycosylation site" description="N-linked (GlcNAc...) asparagine" evidence="3">
    <location>
        <position position="124"/>
    </location>
</feature>
<feature type="glycosylation site" description="N-linked (GlcNAc...) asparagine" evidence="3">
    <location>
        <position position="190"/>
    </location>
</feature>
<feature type="glycosylation site" description="N-linked (GlcNAc...) asparagine" evidence="3">
    <location>
        <position position="441"/>
    </location>
</feature>
<dbReference type="EC" id="2.4.1.-" evidence="5"/>
<dbReference type="EMBL" id="AC006551">
    <property type="protein sequence ID" value="AAF18531.1"/>
    <property type="status" value="ALT_SEQ"/>
    <property type="molecule type" value="Genomic_DNA"/>
</dbReference>
<dbReference type="EMBL" id="CP002684">
    <property type="protein sequence ID" value="AEE30244.1"/>
    <property type="molecule type" value="Genomic_DNA"/>
</dbReference>
<dbReference type="EMBL" id="BT053759">
    <property type="protein sequence ID" value="ACL13986.1"/>
    <property type="molecule type" value="mRNA"/>
</dbReference>
<dbReference type="PIR" id="G86357">
    <property type="entry name" value="G86357"/>
</dbReference>
<dbReference type="RefSeq" id="NP_173662.2">
    <property type="nucleotide sequence ID" value="NM_102095.3"/>
</dbReference>
<dbReference type="FunCoup" id="B7ZWR7">
    <property type="interactions" value="276"/>
</dbReference>
<dbReference type="IntAct" id="B7ZWR7">
    <property type="interactions" value="1"/>
</dbReference>
<dbReference type="STRING" id="3702.B7ZWR7"/>
<dbReference type="GlyCosmos" id="B7ZWR7">
    <property type="glycosylation" value="6 sites, No reported glycans"/>
</dbReference>
<dbReference type="GlyGen" id="B7ZWR7">
    <property type="glycosylation" value="6 sites"/>
</dbReference>
<dbReference type="PaxDb" id="3702-AT1G22460.1"/>
<dbReference type="ProteomicsDB" id="250898"/>
<dbReference type="EnsemblPlants" id="AT1G22460.1">
    <property type="protein sequence ID" value="AT1G22460.1"/>
    <property type="gene ID" value="AT1G22460"/>
</dbReference>
<dbReference type="GeneID" id="838852"/>
<dbReference type="Gramene" id="AT1G22460.1">
    <property type="protein sequence ID" value="AT1G22460.1"/>
    <property type="gene ID" value="AT1G22460"/>
</dbReference>
<dbReference type="KEGG" id="ath:AT1G22460"/>
<dbReference type="Araport" id="AT1G22460"/>
<dbReference type="TAIR" id="AT1G22460"/>
<dbReference type="eggNOG" id="ENOG502QUP6">
    <property type="taxonomic scope" value="Eukaryota"/>
</dbReference>
<dbReference type="HOGENOM" id="CLU_018420_7_0_1"/>
<dbReference type="InParanoid" id="B7ZWR7"/>
<dbReference type="OMA" id="FTPCVAP"/>
<dbReference type="PhylomeDB" id="B7ZWR7"/>
<dbReference type="PRO" id="PR:B7ZWR7"/>
<dbReference type="Proteomes" id="UP000006548">
    <property type="component" value="Chromosome 1"/>
</dbReference>
<dbReference type="ExpressionAtlas" id="B7ZWR7">
    <property type="expression patterns" value="baseline and differential"/>
</dbReference>
<dbReference type="GO" id="GO:0016020">
    <property type="term" value="C:membrane"/>
    <property type="evidence" value="ECO:0007669"/>
    <property type="project" value="UniProtKB-SubCell"/>
</dbReference>
<dbReference type="GO" id="GO:0016757">
    <property type="term" value="F:glycosyltransferase activity"/>
    <property type="evidence" value="ECO:0007669"/>
    <property type="project" value="UniProtKB-KW"/>
</dbReference>
<dbReference type="GO" id="GO:0006004">
    <property type="term" value="P:fucose metabolic process"/>
    <property type="evidence" value="ECO:0007669"/>
    <property type="project" value="UniProtKB-KW"/>
</dbReference>
<dbReference type="CDD" id="cd11299">
    <property type="entry name" value="O-FucT_plant"/>
    <property type="match status" value="1"/>
</dbReference>
<dbReference type="FunFam" id="3.40.50.11350:FF:000011">
    <property type="entry name" value="O-fucosyltransferase 28"/>
    <property type="match status" value="1"/>
</dbReference>
<dbReference type="InterPro" id="IPR024709">
    <property type="entry name" value="FucosylTrfase_pln"/>
</dbReference>
<dbReference type="InterPro" id="IPR019378">
    <property type="entry name" value="GDP-Fuc_O-FucTrfase"/>
</dbReference>
<dbReference type="PANTHER" id="PTHR31741:SF1">
    <property type="entry name" value="O-FUCOSYLTRANSFERASE 7"/>
    <property type="match status" value="1"/>
</dbReference>
<dbReference type="PANTHER" id="PTHR31741">
    <property type="entry name" value="OS02G0726500 PROTEIN-RELATED"/>
    <property type="match status" value="1"/>
</dbReference>
<dbReference type="Pfam" id="PF10250">
    <property type="entry name" value="O-FucT"/>
    <property type="match status" value="1"/>
</dbReference>
<dbReference type="PIRSF" id="PIRSF009360">
    <property type="entry name" value="UCP009360"/>
    <property type="match status" value="1"/>
</dbReference>
<name>OFUT7_ARATH</name>
<sequence length="565" mass="64514">MRRRRKTVVVAVVIRRVLIWAICVMTLLCFLTVHIYVAPFNRLPKLHLNHHNTRRGYIIDYNKSITEQSLTRNLSRPESNEIPLISNPKTNEIQYQSSISEHINNTELVPPHVSTSPSSSSKLNITSGIPDFDKLWKHPPNRNFVPCVSPNPSYTSPLESRGYLLVHTNGGLNQMRAGICDMVAIARIINATLVVPELDKRSFWQDTSKFSDVFDEDHFINALSKDIRVIKKLPKGIDGLTKVVKHFKSYSGLSYYQNEIASMWDEYKVIRAAKSDSRLANNNLPPDIQKLRCRACYEALRFSTKIRSMGELLVDRMRSYGLYIALHLRFEKEMLAFSGCNHGLSASEAAELRRIRKNTAYWKVKDIDGRVQRLKGYCPLTPKEVGILLTALGYSSDTPVYIAAGEIYGGESRLADLRSRFSMLMSKEKLATREELKTFMNHSTQMAALDYIVSIESDVFIPSYSGNMARAVEGHRRFLGHRKTISPDRKAIVRLVDRIGRGAEKDNRKVYERINEIHKTRQGSPRRRKGPASGTKGLERHRSEESFYENPLPDCLCQRDPSKAR</sequence>